<reference key="1">
    <citation type="submission" date="2006-12" db="EMBL/GenBank/DDBJ databases">
        <title>Complete sequence of chromosome 1 of Paracoccus denitrificans PD1222.</title>
        <authorList>
            <person name="Copeland A."/>
            <person name="Lucas S."/>
            <person name="Lapidus A."/>
            <person name="Barry K."/>
            <person name="Detter J.C."/>
            <person name="Glavina del Rio T."/>
            <person name="Hammon N."/>
            <person name="Israni S."/>
            <person name="Dalin E."/>
            <person name="Tice H."/>
            <person name="Pitluck S."/>
            <person name="Munk A.C."/>
            <person name="Brettin T."/>
            <person name="Bruce D."/>
            <person name="Han C."/>
            <person name="Tapia R."/>
            <person name="Gilna P."/>
            <person name="Schmutz J."/>
            <person name="Larimer F."/>
            <person name="Land M."/>
            <person name="Hauser L."/>
            <person name="Kyrpides N."/>
            <person name="Lykidis A."/>
            <person name="Spiro S."/>
            <person name="Richardson D.J."/>
            <person name="Moir J.W.B."/>
            <person name="Ferguson S.J."/>
            <person name="van Spanning R.J.M."/>
            <person name="Richardson P."/>
        </authorList>
    </citation>
    <scope>NUCLEOTIDE SEQUENCE [LARGE SCALE GENOMIC DNA]</scope>
    <source>
        <strain>Pd 1222</strain>
    </source>
</reference>
<keyword id="KW-0028">Amino-acid biosynthesis</keyword>
<keyword id="KW-0055">Arginine biosynthesis</keyword>
<keyword id="KW-0963">Cytoplasm</keyword>
<keyword id="KW-1185">Reference proteome</keyword>
<keyword id="KW-0808">Transferase</keyword>
<name>OTC_PARDP</name>
<feature type="chain" id="PRO_1000163975" description="Ornithine carbamoyltransferase">
    <location>
        <begin position="1"/>
        <end position="308"/>
    </location>
</feature>
<feature type="binding site" evidence="2">
    <location>
        <begin position="56"/>
        <end position="59"/>
    </location>
    <ligand>
        <name>carbamoyl phosphate</name>
        <dbReference type="ChEBI" id="CHEBI:58228"/>
    </ligand>
</feature>
<feature type="binding site" evidence="2">
    <location>
        <position position="83"/>
    </location>
    <ligand>
        <name>carbamoyl phosphate</name>
        <dbReference type="ChEBI" id="CHEBI:58228"/>
    </ligand>
</feature>
<feature type="binding site" evidence="2">
    <location>
        <position position="107"/>
    </location>
    <ligand>
        <name>carbamoyl phosphate</name>
        <dbReference type="ChEBI" id="CHEBI:58228"/>
    </ligand>
</feature>
<feature type="binding site" evidence="2">
    <location>
        <begin position="134"/>
        <end position="137"/>
    </location>
    <ligand>
        <name>carbamoyl phosphate</name>
        <dbReference type="ChEBI" id="CHEBI:58228"/>
    </ligand>
</feature>
<feature type="binding site" evidence="2">
    <location>
        <position position="165"/>
    </location>
    <ligand>
        <name>L-ornithine</name>
        <dbReference type="ChEBI" id="CHEBI:46911"/>
    </ligand>
</feature>
<feature type="binding site" evidence="2">
    <location>
        <position position="225"/>
    </location>
    <ligand>
        <name>L-ornithine</name>
        <dbReference type="ChEBI" id="CHEBI:46911"/>
    </ligand>
</feature>
<feature type="binding site" evidence="2">
    <location>
        <begin position="229"/>
        <end position="230"/>
    </location>
    <ligand>
        <name>L-ornithine</name>
        <dbReference type="ChEBI" id="CHEBI:46911"/>
    </ligand>
</feature>
<feature type="binding site" evidence="2">
    <location>
        <begin position="266"/>
        <end position="267"/>
    </location>
    <ligand>
        <name>carbamoyl phosphate</name>
        <dbReference type="ChEBI" id="CHEBI:58228"/>
    </ligand>
</feature>
<feature type="binding site" evidence="2">
    <location>
        <position position="294"/>
    </location>
    <ligand>
        <name>carbamoyl phosphate</name>
        <dbReference type="ChEBI" id="CHEBI:58228"/>
    </ligand>
</feature>
<organism>
    <name type="scientific">Paracoccus denitrificans (strain Pd 1222)</name>
    <dbReference type="NCBI Taxonomy" id="318586"/>
    <lineage>
        <taxon>Bacteria</taxon>
        <taxon>Pseudomonadati</taxon>
        <taxon>Pseudomonadota</taxon>
        <taxon>Alphaproteobacteria</taxon>
        <taxon>Rhodobacterales</taxon>
        <taxon>Paracoccaceae</taxon>
        <taxon>Paracoccus</taxon>
    </lineage>
</organism>
<accession>A1B3N7</accession>
<dbReference type="EC" id="2.1.3.3" evidence="2"/>
<dbReference type="EMBL" id="CP000489">
    <property type="protein sequence ID" value="ABL70131.1"/>
    <property type="molecule type" value="Genomic_DNA"/>
</dbReference>
<dbReference type="RefSeq" id="WP_011748327.1">
    <property type="nucleotide sequence ID" value="NC_008686.1"/>
</dbReference>
<dbReference type="SMR" id="A1B3N7"/>
<dbReference type="STRING" id="318586.Pden_2039"/>
<dbReference type="EnsemblBacteria" id="ABL70131">
    <property type="protein sequence ID" value="ABL70131"/>
    <property type="gene ID" value="Pden_2039"/>
</dbReference>
<dbReference type="GeneID" id="93450442"/>
<dbReference type="KEGG" id="pde:Pden_2039"/>
<dbReference type="eggNOG" id="COG0078">
    <property type="taxonomic scope" value="Bacteria"/>
</dbReference>
<dbReference type="HOGENOM" id="CLU_043846_3_2_5"/>
<dbReference type="OrthoDB" id="9802587at2"/>
<dbReference type="UniPathway" id="UPA00068">
    <property type="reaction ID" value="UER00112"/>
</dbReference>
<dbReference type="Proteomes" id="UP000000361">
    <property type="component" value="Chromosome 1"/>
</dbReference>
<dbReference type="GO" id="GO:0005737">
    <property type="term" value="C:cytoplasm"/>
    <property type="evidence" value="ECO:0007669"/>
    <property type="project" value="UniProtKB-SubCell"/>
</dbReference>
<dbReference type="GO" id="GO:0016597">
    <property type="term" value="F:amino acid binding"/>
    <property type="evidence" value="ECO:0007669"/>
    <property type="project" value="InterPro"/>
</dbReference>
<dbReference type="GO" id="GO:0004585">
    <property type="term" value="F:ornithine carbamoyltransferase activity"/>
    <property type="evidence" value="ECO:0007669"/>
    <property type="project" value="UniProtKB-UniRule"/>
</dbReference>
<dbReference type="GO" id="GO:0042450">
    <property type="term" value="P:arginine biosynthetic process via ornithine"/>
    <property type="evidence" value="ECO:0007669"/>
    <property type="project" value="TreeGrafter"/>
</dbReference>
<dbReference type="GO" id="GO:0019240">
    <property type="term" value="P:citrulline biosynthetic process"/>
    <property type="evidence" value="ECO:0007669"/>
    <property type="project" value="TreeGrafter"/>
</dbReference>
<dbReference type="GO" id="GO:0006526">
    <property type="term" value="P:L-arginine biosynthetic process"/>
    <property type="evidence" value="ECO:0007669"/>
    <property type="project" value="UniProtKB-UniRule"/>
</dbReference>
<dbReference type="FunFam" id="3.40.50.1370:FF:000008">
    <property type="entry name" value="Ornithine carbamoyltransferase"/>
    <property type="match status" value="1"/>
</dbReference>
<dbReference type="Gene3D" id="3.40.50.1370">
    <property type="entry name" value="Aspartate/ornithine carbamoyltransferase"/>
    <property type="match status" value="2"/>
</dbReference>
<dbReference type="HAMAP" id="MF_01109">
    <property type="entry name" value="OTCase"/>
    <property type="match status" value="1"/>
</dbReference>
<dbReference type="InterPro" id="IPR006132">
    <property type="entry name" value="Asp/Orn_carbamoyltranf_P-bd"/>
</dbReference>
<dbReference type="InterPro" id="IPR006130">
    <property type="entry name" value="Asp/Orn_carbamoylTrfase"/>
</dbReference>
<dbReference type="InterPro" id="IPR036901">
    <property type="entry name" value="Asp/Orn_carbamoylTrfase_sf"/>
</dbReference>
<dbReference type="InterPro" id="IPR006131">
    <property type="entry name" value="Asp_carbamoyltransf_Asp/Orn-bd"/>
</dbReference>
<dbReference type="InterPro" id="IPR002292">
    <property type="entry name" value="Orn/put_carbamltrans"/>
</dbReference>
<dbReference type="InterPro" id="IPR024904">
    <property type="entry name" value="OTCase_ArgI"/>
</dbReference>
<dbReference type="NCBIfam" id="TIGR00658">
    <property type="entry name" value="orni_carb_tr"/>
    <property type="match status" value="1"/>
</dbReference>
<dbReference type="NCBIfam" id="NF001986">
    <property type="entry name" value="PRK00779.1"/>
    <property type="match status" value="1"/>
</dbReference>
<dbReference type="PANTHER" id="PTHR45753">
    <property type="entry name" value="ORNITHINE CARBAMOYLTRANSFERASE, MITOCHONDRIAL"/>
    <property type="match status" value="1"/>
</dbReference>
<dbReference type="PANTHER" id="PTHR45753:SF3">
    <property type="entry name" value="ORNITHINE TRANSCARBAMYLASE, MITOCHONDRIAL"/>
    <property type="match status" value="1"/>
</dbReference>
<dbReference type="Pfam" id="PF00185">
    <property type="entry name" value="OTCace"/>
    <property type="match status" value="1"/>
</dbReference>
<dbReference type="Pfam" id="PF02729">
    <property type="entry name" value="OTCace_N"/>
    <property type="match status" value="1"/>
</dbReference>
<dbReference type="PRINTS" id="PR00100">
    <property type="entry name" value="AOTCASE"/>
</dbReference>
<dbReference type="PRINTS" id="PR00102">
    <property type="entry name" value="OTCASE"/>
</dbReference>
<dbReference type="SUPFAM" id="SSF53671">
    <property type="entry name" value="Aspartate/ornithine carbamoyltransferase"/>
    <property type="match status" value="1"/>
</dbReference>
<dbReference type="PROSITE" id="PS00097">
    <property type="entry name" value="CARBAMOYLTRANSFERASE"/>
    <property type="match status" value="1"/>
</dbReference>
<protein>
    <recommendedName>
        <fullName evidence="2">Ornithine carbamoyltransferase</fullName>
        <shortName evidence="2">OTCase</shortName>
        <ecNumber evidence="2">2.1.3.3</ecNumber>
    </recommendedName>
</protein>
<sequence length="308" mass="34235">MNSFLDIHNTDRSDLRGMIDSARRMKDARSGQPKGTPDADLPLKNRMVALIFEKPSTRTRVSFDLGVRQMGGQTMVLSGKEMQLGHGETIADTARVLSRYVDLIMIRTFEEATLLEMAEYASVPVINGLTNRTHPCQVMADVMTFEEHRGPIAGKKVVWSGDGNNVCCSMIHAAGQFGYDFTFTGPPTLDPEREALDFARAQGVQAVIERDPAKAVEGADLVVTDTWVSMHDPQSARERRHNQLRPYQVNEALMAHAKPDALFMHCLPAHRDDEATSAVMDGPNSVIFDEAENRLHAQKAIMRWCLGL</sequence>
<evidence type="ECO:0000250" key="1"/>
<evidence type="ECO:0000255" key="2">
    <source>
        <dbReference type="HAMAP-Rule" id="MF_01109"/>
    </source>
</evidence>
<gene>
    <name evidence="2" type="primary">argF</name>
    <name type="ordered locus">Pden_2039</name>
</gene>
<proteinExistence type="inferred from homology"/>
<comment type="function">
    <text evidence="1">Reversibly catalyzes the transfer of the carbamoyl group from carbamoyl phosphate (CP) to the N(epsilon) atom of ornithine (ORN) to produce L-citrulline.</text>
</comment>
<comment type="catalytic activity">
    <reaction evidence="2">
        <text>carbamoyl phosphate + L-ornithine = L-citrulline + phosphate + H(+)</text>
        <dbReference type="Rhea" id="RHEA:19513"/>
        <dbReference type="ChEBI" id="CHEBI:15378"/>
        <dbReference type="ChEBI" id="CHEBI:43474"/>
        <dbReference type="ChEBI" id="CHEBI:46911"/>
        <dbReference type="ChEBI" id="CHEBI:57743"/>
        <dbReference type="ChEBI" id="CHEBI:58228"/>
        <dbReference type="EC" id="2.1.3.3"/>
    </reaction>
</comment>
<comment type="pathway">
    <text evidence="2">Amino-acid biosynthesis; L-arginine biosynthesis; L-arginine from L-ornithine and carbamoyl phosphate: step 1/3.</text>
</comment>
<comment type="subcellular location">
    <subcellularLocation>
        <location evidence="2">Cytoplasm</location>
    </subcellularLocation>
</comment>
<comment type="similarity">
    <text evidence="2">Belongs to the aspartate/ornithine carbamoyltransferase superfamily. OTCase family.</text>
</comment>